<sequence length="620" mass="66852">MSDTDADADTDAVSTTETSMNADANANADGDTLRTPIVAVLGHVDHGKTTLLDTVRGSAVSEDEAGAITQHIGATAVPLETVSEMAGELVDPADFDLPGLLFIDTPGHHSFTTLRSRGGALADIAVVVVDVNDGFQPQTIEALDILQRTGTPFVVAANKVDTTPGWTPTDGSPIQPTYESQPSAARDRLDERLYELIGDLSDEGFSGDLYWRVQNFTKNVGVVPLSAITSEGVPDLLAVLMGLSQRYMREQMAIDITGPGAGTILEVKDERGFGATVDVVLYDGSVRPDDIIVVGGTDGPIVTDVRALLQPRPNAEIRTENRFDRVEIAQAAAGVKIAAPDLDNAMAGAPLRVVRNRDRANVVSEVEAELADIAVETAEEGVVVKADTLGSLEAMANALKEADVPILRAEVGDVAPRDIAIASTANEERNQTVLGFSVDVLSNASDELEESNVRLFTDDVIYQLVDEYKSYVDEQERAQQETVLDKIVRPCRFRILEDHVFRQSSPAVVGVEVLSGTLKNNQYIIKWNGNEPARIGELSGIQEQGEDVSSARAGTRVSIAIDGPTVGRQIEEGDELWVELPEKHAKILEQELIDEIPADELEALTSYLDSHRKRDPFWGK</sequence>
<gene>
    <name evidence="2" type="primary">infB</name>
    <name type="ordered locus">HQ_3074A</name>
</gene>
<organism>
    <name type="scientific">Haloquadratum walsbyi (strain DSM 16790 / HBSQ001)</name>
    <dbReference type="NCBI Taxonomy" id="362976"/>
    <lineage>
        <taxon>Archaea</taxon>
        <taxon>Methanobacteriati</taxon>
        <taxon>Methanobacteriota</taxon>
        <taxon>Stenosarchaea group</taxon>
        <taxon>Halobacteria</taxon>
        <taxon>Halobacteriales</taxon>
        <taxon>Haloferacaceae</taxon>
        <taxon>Haloquadratum</taxon>
    </lineage>
</organism>
<evidence type="ECO:0000250" key="1"/>
<evidence type="ECO:0000255" key="2">
    <source>
        <dbReference type="HAMAP-Rule" id="MF_00100"/>
    </source>
</evidence>
<evidence type="ECO:0000256" key="3">
    <source>
        <dbReference type="SAM" id="MobiDB-lite"/>
    </source>
</evidence>
<protein>
    <recommendedName>
        <fullName evidence="2">Probable translation initiation factor IF-2</fullName>
    </recommendedName>
</protein>
<comment type="function">
    <text evidence="2">Function in general translation initiation by promoting the binding of the formylmethionine-tRNA to ribosomes. Seems to function along with eIF-2.</text>
</comment>
<comment type="similarity">
    <text evidence="2">Belongs to the TRAFAC class translation factor GTPase superfamily. Classic translation factor GTPase family. IF-2 subfamily.</text>
</comment>
<accession>Q18FT0</accession>
<name>IF2P_HALWD</name>
<keyword id="KW-0342">GTP-binding</keyword>
<keyword id="KW-0396">Initiation factor</keyword>
<keyword id="KW-0547">Nucleotide-binding</keyword>
<keyword id="KW-0648">Protein biosynthesis</keyword>
<keyword id="KW-1185">Reference proteome</keyword>
<feature type="chain" id="PRO_0000335522" description="Probable translation initiation factor IF-2">
    <location>
        <begin position="1"/>
        <end position="620"/>
    </location>
</feature>
<feature type="domain" description="tr-type G">
    <location>
        <begin position="33"/>
        <end position="248"/>
    </location>
</feature>
<feature type="region of interest" description="Disordered" evidence="3">
    <location>
        <begin position="1"/>
        <end position="29"/>
    </location>
</feature>
<feature type="region of interest" description="G1" evidence="1">
    <location>
        <begin position="42"/>
        <end position="49"/>
    </location>
</feature>
<feature type="region of interest" description="G2" evidence="1">
    <location>
        <begin position="67"/>
        <end position="71"/>
    </location>
</feature>
<feature type="region of interest" description="G3" evidence="1">
    <location>
        <begin position="104"/>
        <end position="107"/>
    </location>
</feature>
<feature type="region of interest" description="G4" evidence="1">
    <location>
        <begin position="158"/>
        <end position="161"/>
    </location>
</feature>
<feature type="region of interest" description="Disordered" evidence="3">
    <location>
        <begin position="162"/>
        <end position="185"/>
    </location>
</feature>
<feature type="region of interest" description="G5" evidence="1">
    <location>
        <begin position="226"/>
        <end position="228"/>
    </location>
</feature>
<feature type="compositionally biased region" description="Acidic residues" evidence="3">
    <location>
        <begin position="1"/>
        <end position="10"/>
    </location>
</feature>
<feature type="compositionally biased region" description="Low complexity" evidence="3">
    <location>
        <begin position="11"/>
        <end position="29"/>
    </location>
</feature>
<feature type="compositionally biased region" description="Polar residues" evidence="3">
    <location>
        <begin position="162"/>
        <end position="183"/>
    </location>
</feature>
<feature type="binding site" evidence="2">
    <location>
        <begin position="42"/>
        <end position="49"/>
    </location>
    <ligand>
        <name>GTP</name>
        <dbReference type="ChEBI" id="CHEBI:37565"/>
    </ligand>
</feature>
<feature type="binding site" evidence="2">
    <location>
        <begin position="104"/>
        <end position="108"/>
    </location>
    <ligand>
        <name>GTP</name>
        <dbReference type="ChEBI" id="CHEBI:37565"/>
    </ligand>
</feature>
<feature type="binding site" evidence="2">
    <location>
        <begin position="158"/>
        <end position="161"/>
    </location>
    <ligand>
        <name>GTP</name>
        <dbReference type="ChEBI" id="CHEBI:37565"/>
    </ligand>
</feature>
<reference key="1">
    <citation type="journal article" date="2006" name="BMC Genomics">
        <title>The genome of the square archaeon Haloquadratum walsbyi: life at the limits of water activity.</title>
        <authorList>
            <person name="Bolhuis H."/>
            <person name="Palm P."/>
            <person name="Wende A."/>
            <person name="Falb M."/>
            <person name="Rampp M."/>
            <person name="Rodriguez-Valera F."/>
            <person name="Pfeiffer F."/>
            <person name="Oesterhelt D."/>
        </authorList>
    </citation>
    <scope>NUCLEOTIDE SEQUENCE [LARGE SCALE GENOMIC DNA]</scope>
    <source>
        <strain>DSM 16790 / HBSQ001</strain>
    </source>
</reference>
<proteinExistence type="inferred from homology"/>
<dbReference type="EMBL" id="AM180088">
    <property type="protein sequence ID" value="CAJ53175.1"/>
    <property type="molecule type" value="Genomic_DNA"/>
</dbReference>
<dbReference type="SMR" id="Q18FT0"/>
<dbReference type="STRING" id="362976.HQ_3074A"/>
<dbReference type="KEGG" id="hwa:HQ_3074A"/>
<dbReference type="eggNOG" id="arCOG01560">
    <property type="taxonomic scope" value="Archaea"/>
</dbReference>
<dbReference type="HOGENOM" id="CLU_002656_3_3_2"/>
<dbReference type="Proteomes" id="UP000001975">
    <property type="component" value="Chromosome"/>
</dbReference>
<dbReference type="GO" id="GO:0005737">
    <property type="term" value="C:cytoplasm"/>
    <property type="evidence" value="ECO:0007669"/>
    <property type="project" value="TreeGrafter"/>
</dbReference>
<dbReference type="GO" id="GO:0005525">
    <property type="term" value="F:GTP binding"/>
    <property type="evidence" value="ECO:0007669"/>
    <property type="project" value="UniProtKB-KW"/>
</dbReference>
<dbReference type="GO" id="GO:0003924">
    <property type="term" value="F:GTPase activity"/>
    <property type="evidence" value="ECO:0007669"/>
    <property type="project" value="UniProtKB-UniRule"/>
</dbReference>
<dbReference type="GO" id="GO:0003743">
    <property type="term" value="F:translation initiation factor activity"/>
    <property type="evidence" value="ECO:0007669"/>
    <property type="project" value="UniProtKB-UniRule"/>
</dbReference>
<dbReference type="CDD" id="cd03703">
    <property type="entry name" value="aeIF5B_II"/>
    <property type="match status" value="1"/>
</dbReference>
<dbReference type="CDD" id="cd16266">
    <property type="entry name" value="IF2_aeIF5B_IV"/>
    <property type="match status" value="1"/>
</dbReference>
<dbReference type="CDD" id="cd01887">
    <property type="entry name" value="IF2_eIF5B"/>
    <property type="match status" value="1"/>
</dbReference>
<dbReference type="FunFam" id="3.40.50.300:FF:000112">
    <property type="entry name" value="Eukaryotic translation initiation factor 5B"/>
    <property type="match status" value="1"/>
</dbReference>
<dbReference type="FunFam" id="2.40.30.10:FF:000013">
    <property type="entry name" value="eukaryotic translation initiation factor 5B"/>
    <property type="match status" value="1"/>
</dbReference>
<dbReference type="FunFam" id="3.40.50.10050:FF:000001">
    <property type="entry name" value="Translation initiation factor IF-2"/>
    <property type="match status" value="1"/>
</dbReference>
<dbReference type="Gene3D" id="3.40.50.300">
    <property type="entry name" value="P-loop containing nucleotide triphosphate hydrolases"/>
    <property type="match status" value="1"/>
</dbReference>
<dbReference type="Gene3D" id="2.40.30.10">
    <property type="entry name" value="Translation factors"/>
    <property type="match status" value="2"/>
</dbReference>
<dbReference type="Gene3D" id="3.40.50.10050">
    <property type="entry name" value="Translation initiation factor IF- 2, domain 3"/>
    <property type="match status" value="1"/>
</dbReference>
<dbReference type="HAMAP" id="MF_00100_A">
    <property type="entry name" value="IF_2_A"/>
    <property type="match status" value="1"/>
</dbReference>
<dbReference type="InterPro" id="IPR029459">
    <property type="entry name" value="EFTU-type"/>
</dbReference>
<dbReference type="InterPro" id="IPR027417">
    <property type="entry name" value="P-loop_NTPase"/>
</dbReference>
<dbReference type="InterPro" id="IPR005225">
    <property type="entry name" value="Small_GTP-bd"/>
</dbReference>
<dbReference type="InterPro" id="IPR000795">
    <property type="entry name" value="T_Tr_GTP-bd_dom"/>
</dbReference>
<dbReference type="InterPro" id="IPR004544">
    <property type="entry name" value="TF_aIF-2_arc"/>
</dbReference>
<dbReference type="InterPro" id="IPR015760">
    <property type="entry name" value="TIF_IF2"/>
</dbReference>
<dbReference type="InterPro" id="IPR023115">
    <property type="entry name" value="TIF_IF2_dom3"/>
</dbReference>
<dbReference type="InterPro" id="IPR036925">
    <property type="entry name" value="TIF_IF2_dom3_sf"/>
</dbReference>
<dbReference type="InterPro" id="IPR009000">
    <property type="entry name" value="Transl_B-barrel_sf"/>
</dbReference>
<dbReference type="NCBIfam" id="TIGR00491">
    <property type="entry name" value="aIF-2"/>
    <property type="match status" value="1"/>
</dbReference>
<dbReference type="NCBIfam" id="NF003078">
    <property type="entry name" value="PRK04004.1"/>
    <property type="match status" value="1"/>
</dbReference>
<dbReference type="NCBIfam" id="TIGR00231">
    <property type="entry name" value="small_GTP"/>
    <property type="match status" value="1"/>
</dbReference>
<dbReference type="PANTHER" id="PTHR43381:SF4">
    <property type="entry name" value="EUKARYOTIC TRANSLATION INITIATION FACTOR 5B"/>
    <property type="match status" value="1"/>
</dbReference>
<dbReference type="PANTHER" id="PTHR43381">
    <property type="entry name" value="TRANSLATION INITIATION FACTOR IF-2-RELATED"/>
    <property type="match status" value="1"/>
</dbReference>
<dbReference type="Pfam" id="PF00009">
    <property type="entry name" value="GTP_EFTU"/>
    <property type="match status" value="1"/>
</dbReference>
<dbReference type="Pfam" id="PF14578">
    <property type="entry name" value="GTP_EFTU_D4"/>
    <property type="match status" value="1"/>
</dbReference>
<dbReference type="Pfam" id="PF11987">
    <property type="entry name" value="IF-2"/>
    <property type="match status" value="1"/>
</dbReference>
<dbReference type="PRINTS" id="PR00315">
    <property type="entry name" value="ELONGATNFCT"/>
</dbReference>
<dbReference type="SUPFAM" id="SSF52156">
    <property type="entry name" value="Initiation factor IF2/eIF5b, domain 3"/>
    <property type="match status" value="1"/>
</dbReference>
<dbReference type="SUPFAM" id="SSF52540">
    <property type="entry name" value="P-loop containing nucleoside triphosphate hydrolases"/>
    <property type="match status" value="1"/>
</dbReference>
<dbReference type="SUPFAM" id="SSF50447">
    <property type="entry name" value="Translation proteins"/>
    <property type="match status" value="1"/>
</dbReference>
<dbReference type="PROSITE" id="PS51722">
    <property type="entry name" value="G_TR_2"/>
    <property type="match status" value="1"/>
</dbReference>